<gene>
    <name type="primary">Znf467</name>
    <name type="synonym">Zfp467</name>
</gene>
<keyword id="KW-0238">DNA-binding</keyword>
<keyword id="KW-1017">Isopeptide bond</keyword>
<keyword id="KW-0479">Metal-binding</keyword>
<keyword id="KW-0539">Nucleus</keyword>
<keyword id="KW-1185">Reference proteome</keyword>
<keyword id="KW-0677">Repeat</keyword>
<keyword id="KW-0804">Transcription</keyword>
<keyword id="KW-0805">Transcription regulation</keyword>
<keyword id="KW-0832">Ubl conjugation</keyword>
<keyword id="KW-0862">Zinc</keyword>
<keyword id="KW-0863">Zinc-finger</keyword>
<name>ZN467_RAT</name>
<sequence length="594" mass="65753">MRETLEALNSLGFSVGQPEMAPQSEPRDGFSNPQEKMSSRDESTLHSCSGPETPGQKEGIHTEQAEAPCMGSQACIPQKAEPASSVPGEEWMIRKVKVEDEDQEAEEEVEWPQHLSFLPSPFPTPDLGQLAVAYKLEPGTPGTLGGIALSGWAPIPEKPYGCEECERRFRDQLTLRLHQRLHRGEGPCACPDCGRSFTQRAHMLLHQRSHRGERPFPCSECDKRFSKKAHLTRHLRTHTGERPYPCAECGKRFSQKIHLGSHQKTHTGERPFPCTECEKRFRKKTHLIRHQRIHTGERPYQCTQCTRSFTHKQHLVRHQRVHDAASRTRSSPDIPATPHPPTASLAPSPTGPKPFACSHCGQSFGWKKNLATHQSLHLTEGRPFGCDECALGTNVDPAAEPSACTPHAPDCGPGSGPVAPQRTTSSERSFFCPDCGRGFAHGQHLARHRRVHTGERPFACAQCGRRFGSRPNLVAHSRAHSGARPFACAQCGRRFSRKSHLGRHQAVHTGSRPHACAVCARCFSSKTNLVRHQAIHTGSRPFSCPQCAKSFSRKTHLVRHQRIHGEAALPASASNLSAPAWSNPSEVVPPPIFF</sequence>
<reference key="1">
    <citation type="journal article" date="2004" name="Genome Res.">
        <title>The status, quality, and expansion of the NIH full-length cDNA project: the Mammalian Gene Collection (MGC).</title>
        <authorList>
            <consortium name="The MGC Project Team"/>
        </authorList>
    </citation>
    <scope>NUCLEOTIDE SEQUENCE [LARGE SCALE MRNA]</scope>
    <source>
        <tissue>Lung</tissue>
    </source>
</reference>
<proteinExistence type="evidence at transcript level"/>
<organism>
    <name type="scientific">Rattus norvegicus</name>
    <name type="common">Rat</name>
    <dbReference type="NCBI Taxonomy" id="10116"/>
    <lineage>
        <taxon>Eukaryota</taxon>
        <taxon>Metazoa</taxon>
        <taxon>Chordata</taxon>
        <taxon>Craniata</taxon>
        <taxon>Vertebrata</taxon>
        <taxon>Euteleostomi</taxon>
        <taxon>Mammalia</taxon>
        <taxon>Eutheria</taxon>
        <taxon>Euarchontoglires</taxon>
        <taxon>Glires</taxon>
        <taxon>Rodentia</taxon>
        <taxon>Myomorpha</taxon>
        <taxon>Muroidea</taxon>
        <taxon>Muridae</taxon>
        <taxon>Murinae</taxon>
        <taxon>Rattus</taxon>
    </lineage>
</organism>
<comment type="function">
    <text evidence="1">Transcription factor that promotes adipocyte differentiation and suppresses osteoblast differentiation in the bone marrow. Enhances the osteoclast-supporting ability of stromal cells. Binds with STAT3 the consensus sequence 5'-CTTCTGGGAAGA-3' of the acute phase response element (APRE). Transactivates several promoters including FOS, OSM and PPARG. Recruits a histone deacetylase complex (By similarity).</text>
</comment>
<comment type="subunit">
    <text evidence="1">Interacts with STAT3. Enhances STAT3 activity by keeping it in the nucleus (By similarity).</text>
</comment>
<comment type="subcellular location">
    <subcellularLocation>
        <location evidence="1">Nucleus</location>
    </subcellularLocation>
</comment>
<comment type="similarity">
    <text evidence="5">Belongs to the krueppel C2H2-type zinc-finger protein family.</text>
</comment>
<feature type="chain" id="PRO_0000247519" description="Zinc finger protein 467">
    <location>
        <begin position="1"/>
        <end position="594"/>
    </location>
</feature>
<feature type="zinc finger region" description="C2H2-type 1" evidence="3">
    <location>
        <begin position="160"/>
        <end position="182"/>
    </location>
</feature>
<feature type="zinc finger region" description="C2H2-type 2" evidence="3">
    <location>
        <begin position="188"/>
        <end position="210"/>
    </location>
</feature>
<feature type="zinc finger region" description="C2H2-type 3" evidence="3">
    <location>
        <begin position="216"/>
        <end position="238"/>
    </location>
</feature>
<feature type="zinc finger region" description="C2H2-type 4" evidence="3">
    <location>
        <begin position="244"/>
        <end position="266"/>
    </location>
</feature>
<feature type="zinc finger region" description="C2H2-type 5" evidence="3">
    <location>
        <begin position="272"/>
        <end position="294"/>
    </location>
</feature>
<feature type="zinc finger region" description="C2H2-type 6" evidence="3">
    <location>
        <begin position="300"/>
        <end position="322"/>
    </location>
</feature>
<feature type="zinc finger region" description="C2H2-type 7" evidence="3">
    <location>
        <begin position="355"/>
        <end position="377"/>
    </location>
</feature>
<feature type="zinc finger region" description="C2H2-type 8" evidence="3">
    <location>
        <begin position="430"/>
        <end position="452"/>
    </location>
</feature>
<feature type="zinc finger region" description="C2H2-type 9" evidence="3">
    <location>
        <begin position="458"/>
        <end position="480"/>
    </location>
</feature>
<feature type="zinc finger region" description="C2H2-type 10" evidence="3">
    <location>
        <begin position="486"/>
        <end position="508"/>
    </location>
</feature>
<feature type="zinc finger region" description="C2H2-type 11" evidence="3">
    <location>
        <begin position="514"/>
        <end position="536"/>
    </location>
</feature>
<feature type="zinc finger region" description="C2H2-type 12" evidence="3">
    <location>
        <begin position="542"/>
        <end position="564"/>
    </location>
</feature>
<feature type="region of interest" description="Disordered" evidence="4">
    <location>
        <begin position="1"/>
        <end position="70"/>
    </location>
</feature>
<feature type="region of interest" description="Disordered" evidence="4">
    <location>
        <begin position="313"/>
        <end position="350"/>
    </location>
</feature>
<feature type="cross-link" description="Glycyl lysine isopeptide (Lys-Gly) (interchain with G-Cter in SUMO2)" evidence="2">
    <location>
        <position position="97"/>
    </location>
</feature>
<feature type="cross-link" description="Glycyl lysine isopeptide (Lys-Gly) (interchain with G-Cter in SUMO2)" evidence="2">
    <location>
        <position position="368"/>
    </location>
</feature>
<accession>Q5RJR4</accession>
<dbReference type="EMBL" id="BC086534">
    <property type="protein sequence ID" value="AAH86534.1"/>
    <property type="molecule type" value="mRNA"/>
</dbReference>
<dbReference type="RefSeq" id="NP_001019498.1">
    <property type="nucleotide sequence ID" value="NM_001024327.1"/>
</dbReference>
<dbReference type="RefSeq" id="XP_006236493.1">
    <property type="nucleotide sequence ID" value="XM_006236431.3"/>
</dbReference>
<dbReference type="RefSeq" id="XP_006236494.1">
    <property type="nucleotide sequence ID" value="XM_006236432.3"/>
</dbReference>
<dbReference type="RefSeq" id="XP_006236495.1">
    <property type="nucleotide sequence ID" value="XM_006236433.3"/>
</dbReference>
<dbReference type="RefSeq" id="XP_006236496.1">
    <property type="nucleotide sequence ID" value="XM_006236434.3"/>
</dbReference>
<dbReference type="SMR" id="Q5RJR4"/>
<dbReference type="FunCoup" id="Q5RJR4">
    <property type="interactions" value="8"/>
</dbReference>
<dbReference type="STRING" id="10116.ENSRNOP00000010377"/>
<dbReference type="GlyGen" id="Q5RJR4">
    <property type="glycosylation" value="1 site"/>
</dbReference>
<dbReference type="PhosphoSitePlus" id="Q5RJR4"/>
<dbReference type="PaxDb" id="10116-ENSRNOP00000010377"/>
<dbReference type="Ensembl" id="ENSRNOT00000010377.7">
    <property type="protein sequence ID" value="ENSRNOP00000010377.4"/>
    <property type="gene ID" value="ENSRNOG00000007707.7"/>
</dbReference>
<dbReference type="GeneID" id="500110"/>
<dbReference type="KEGG" id="rno:500110"/>
<dbReference type="UCSC" id="RGD:1561603">
    <property type="organism name" value="rat"/>
</dbReference>
<dbReference type="AGR" id="RGD:1561603"/>
<dbReference type="CTD" id="68910"/>
<dbReference type="RGD" id="1561603">
    <property type="gene designation" value="Zfp467"/>
</dbReference>
<dbReference type="eggNOG" id="KOG1721">
    <property type="taxonomic scope" value="Eukaryota"/>
</dbReference>
<dbReference type="GeneTree" id="ENSGT00940000162497"/>
<dbReference type="HOGENOM" id="CLU_002678_73_2_1"/>
<dbReference type="InParanoid" id="Q5RJR4"/>
<dbReference type="OMA" id="QCAQCTR"/>
<dbReference type="OrthoDB" id="8117402at2759"/>
<dbReference type="PhylomeDB" id="Q5RJR4"/>
<dbReference type="TreeFam" id="TF326846"/>
<dbReference type="PRO" id="PR:Q5RJR4"/>
<dbReference type="Proteomes" id="UP000002494">
    <property type="component" value="Chromosome 4"/>
</dbReference>
<dbReference type="Bgee" id="ENSRNOG00000007707">
    <property type="expression patterns" value="Expressed in liver and 19 other cell types or tissues"/>
</dbReference>
<dbReference type="ExpressionAtlas" id="Q5RJR4">
    <property type="expression patterns" value="baseline and differential"/>
</dbReference>
<dbReference type="GO" id="GO:0005634">
    <property type="term" value="C:nucleus"/>
    <property type="evidence" value="ECO:0000266"/>
    <property type="project" value="RGD"/>
</dbReference>
<dbReference type="GO" id="GO:0003677">
    <property type="term" value="F:DNA binding"/>
    <property type="evidence" value="ECO:0000266"/>
    <property type="project" value="RGD"/>
</dbReference>
<dbReference type="GO" id="GO:0008270">
    <property type="term" value="F:zinc ion binding"/>
    <property type="evidence" value="ECO:0007669"/>
    <property type="project" value="UniProtKB-KW"/>
</dbReference>
<dbReference type="GO" id="GO:0006355">
    <property type="term" value="P:regulation of DNA-templated transcription"/>
    <property type="evidence" value="ECO:0000266"/>
    <property type="project" value="RGD"/>
</dbReference>
<dbReference type="GO" id="GO:0006357">
    <property type="term" value="P:regulation of transcription by RNA polymerase II"/>
    <property type="evidence" value="ECO:0000318"/>
    <property type="project" value="GO_Central"/>
</dbReference>
<dbReference type="FunFam" id="3.30.160.60:FF:000214">
    <property type="entry name" value="replication initiator 1 isoform X1"/>
    <property type="match status" value="1"/>
</dbReference>
<dbReference type="FunFam" id="3.30.160.60:FF:000750">
    <property type="entry name" value="replication initiator 1 isoform X2"/>
    <property type="match status" value="2"/>
</dbReference>
<dbReference type="FunFam" id="3.30.160.60:FF:001598">
    <property type="entry name" value="Zinc finger protein 467"/>
    <property type="match status" value="1"/>
</dbReference>
<dbReference type="FunFam" id="3.30.160.60:FF:001683">
    <property type="entry name" value="Zinc finger protein 467"/>
    <property type="match status" value="1"/>
</dbReference>
<dbReference type="FunFam" id="3.30.160.60:FF:001800">
    <property type="entry name" value="Zinc finger protein 467"/>
    <property type="match status" value="1"/>
</dbReference>
<dbReference type="FunFam" id="3.30.160.60:FF:001850">
    <property type="entry name" value="Zinc finger protein 467"/>
    <property type="match status" value="1"/>
</dbReference>
<dbReference type="FunFam" id="3.30.160.60:FF:001993">
    <property type="entry name" value="Zinc finger protein 467"/>
    <property type="match status" value="1"/>
</dbReference>
<dbReference type="FunFam" id="3.30.160.60:FF:001789">
    <property type="entry name" value="zinc finger protein 467"/>
    <property type="match status" value="1"/>
</dbReference>
<dbReference type="FunFam" id="3.30.160.60:FF:000320">
    <property type="entry name" value="Zinc finger protein 777"/>
    <property type="match status" value="3"/>
</dbReference>
<dbReference type="Gene3D" id="3.30.160.60">
    <property type="entry name" value="Classic Zinc Finger"/>
    <property type="match status" value="12"/>
</dbReference>
<dbReference type="InterPro" id="IPR036236">
    <property type="entry name" value="Znf_C2H2_sf"/>
</dbReference>
<dbReference type="InterPro" id="IPR013087">
    <property type="entry name" value="Znf_C2H2_type"/>
</dbReference>
<dbReference type="PANTHER" id="PTHR24394">
    <property type="entry name" value="ZINC FINGER PROTEIN"/>
    <property type="match status" value="1"/>
</dbReference>
<dbReference type="PANTHER" id="PTHR24394:SF48">
    <property type="entry name" value="ZINC FINGER PROTEIN 771"/>
    <property type="match status" value="1"/>
</dbReference>
<dbReference type="Pfam" id="PF00096">
    <property type="entry name" value="zf-C2H2"/>
    <property type="match status" value="10"/>
</dbReference>
<dbReference type="SMART" id="SM00355">
    <property type="entry name" value="ZnF_C2H2"/>
    <property type="match status" value="12"/>
</dbReference>
<dbReference type="SUPFAM" id="SSF57667">
    <property type="entry name" value="beta-beta-alpha zinc fingers"/>
    <property type="match status" value="7"/>
</dbReference>
<dbReference type="PROSITE" id="PS00028">
    <property type="entry name" value="ZINC_FINGER_C2H2_1"/>
    <property type="match status" value="12"/>
</dbReference>
<dbReference type="PROSITE" id="PS50157">
    <property type="entry name" value="ZINC_FINGER_C2H2_2"/>
    <property type="match status" value="12"/>
</dbReference>
<protein>
    <recommendedName>
        <fullName>Zinc finger protein 467</fullName>
    </recommendedName>
</protein>
<evidence type="ECO:0000250" key="1"/>
<evidence type="ECO:0000250" key="2">
    <source>
        <dbReference type="UniProtKB" id="Q7Z7K2"/>
    </source>
</evidence>
<evidence type="ECO:0000255" key="3">
    <source>
        <dbReference type="PROSITE-ProRule" id="PRU00042"/>
    </source>
</evidence>
<evidence type="ECO:0000256" key="4">
    <source>
        <dbReference type="SAM" id="MobiDB-lite"/>
    </source>
</evidence>
<evidence type="ECO:0000305" key="5"/>